<gene>
    <name type="primary">PTBP1</name>
</gene>
<sequence length="557" mass="59535">MDGIVPDIAVGTKRGSDELFSACVTNGPFIMSGTSASTANGNDSKKFKGDSRSAGVPSRVIHIRKLPGDVTEGEVISLGLPFGKVTNLLMLKGKNQAFIEMHTEEAANTMVNYYTSVTPVLRGQPIYIQFSNHKELKTDSSPNQARAQAALQAVNSVQSGNLALAASAAAVDAGMAMAGQSPVLRIIVENLFYPVTLDVLHQIFSKFGTVLKIITFTKNNQFQALLQYADPVSAQHAKLSLDGQNIYNACCTLRIDFSKLTSLNVKYNNDKSRDYTRPDLPSGDSQPSLDQTMAAAFGAPGIMSASPYAGAGFPPTFAIPQAAGLSVPNVHGALAPLAIPSAAAAAAAAGRIAIPGLAGAGNSVLLVSNLNPERVTPQSLFILFGVYGDVQRVKVLFNKKENALVQMADGSQAQLAMSHLNGHKLHGKPVRITLSKHQSVQLPREGQEDQGLTKDYGNSPLHRFKKPGSKNFQNIFPPSATLHLSNIPPSISEDDLKILFSSNGGIVKGFKFFQKDRKMALIQMGSVEEAIQALIDLHNHDLGENHHLRVSFSKSTI</sequence>
<proteinExistence type="evidence at transcript level"/>
<reference key="1">
    <citation type="submission" date="2001-11" db="EMBL/GenBank/DDBJ databases">
        <title>Cloning and characterization of bovine mRNA encoding polypyrimidine-tract binding protein (PTB).</title>
        <authorList>
            <person name="Guibert S."/>
            <person name="Julien R."/>
            <person name="Oulmouden A."/>
        </authorList>
    </citation>
    <scope>NUCLEOTIDE SEQUENCE [MRNA] (ISOFORM 2)</scope>
    <source>
        <strain>Holstein</strain>
        <tissue>Skin</tissue>
    </source>
</reference>
<reference evidence="6" key="2">
    <citation type="submission" date="2018-03" db="EMBL/GenBank/DDBJ databases">
        <title>ARS-UCD1.2.</title>
        <authorList>
            <person name="Rosen B.D."/>
            <person name="Bickhart D.M."/>
            <person name="Koren S."/>
            <person name="Schnabel R.D."/>
            <person name="Hall R."/>
            <person name="Zimin A."/>
            <person name="Dreischer C."/>
            <person name="Schultheiss S."/>
            <person name="Schroeder S.G."/>
            <person name="Elsik C.G."/>
            <person name="Couldrey C."/>
            <person name="Liu G.E."/>
            <person name="Van Tassell C.P."/>
            <person name="Phillippy A.M."/>
            <person name="Smith T.P.L."/>
            <person name="Medrano J.F."/>
        </authorList>
    </citation>
    <scope>NUCLEOTIDE SEQUENCE [LARGE SCALE GENOMIC DNA]</scope>
    <source>
        <strain evidence="6">Hereford</strain>
    </source>
</reference>
<accession>Q8WN55</accession>
<accession>A0A3Q1M994</accession>
<feature type="chain" id="PRO_0000232931" description="Polypyrimidine tract-binding protein 1">
    <location>
        <begin position="1"/>
        <end position="557"/>
    </location>
</feature>
<feature type="domain" description="RRM 1" evidence="3">
    <location>
        <begin position="59"/>
        <end position="143"/>
    </location>
</feature>
<feature type="domain" description="RRM 2" evidence="3">
    <location>
        <begin position="184"/>
        <end position="260"/>
    </location>
</feature>
<feature type="domain" description="RRM 3" evidence="3">
    <location>
        <begin position="363"/>
        <end position="437"/>
    </location>
</feature>
<feature type="domain" description="RRM 4" evidence="3">
    <location>
        <begin position="480"/>
        <end position="555"/>
    </location>
</feature>
<feature type="region of interest" description="Disordered" evidence="4">
    <location>
        <begin position="437"/>
        <end position="460"/>
    </location>
</feature>
<feature type="modified residue" description="N-acetylmethionine" evidence="2">
    <location>
        <position position="1"/>
    </location>
</feature>
<feature type="modified residue" description="Phosphoserine" evidence="2">
    <location>
        <position position="16"/>
    </location>
</feature>
<feature type="modified residue" description="Phosphotyrosine" evidence="2">
    <location>
        <position position="127"/>
    </location>
</feature>
<feature type="modified residue" description="Phosphothreonine" evidence="2">
    <location>
        <position position="138"/>
    </location>
</feature>
<feature type="modified residue" description="Phosphoserine" evidence="2">
    <location>
        <position position="141"/>
    </location>
</feature>
<feature type="modified residue" description="Phosphoserine" evidence="2">
    <location>
        <position position="459"/>
    </location>
</feature>
<feature type="cross-link" description="Glycyl lysine isopeptide (Lys-Gly) (interchain with G-Cter in SUMO2)" evidence="2">
    <location>
        <position position="65"/>
    </location>
</feature>
<feature type="cross-link" description="Glycyl lysine isopeptide (Lys-Gly) (interchain with G-Cter in SUMO2)" evidence="2">
    <location>
        <position position="218"/>
    </location>
</feature>
<feature type="splice variant" id="VSP_061651" description="In isoform 2." evidence="5">
    <location>
        <begin position="298"/>
        <end position="323"/>
    </location>
</feature>
<evidence type="ECO:0000250" key="1"/>
<evidence type="ECO:0000250" key="2">
    <source>
        <dbReference type="UniProtKB" id="P26599"/>
    </source>
</evidence>
<evidence type="ECO:0000255" key="3">
    <source>
        <dbReference type="PROSITE-ProRule" id="PRU00176"/>
    </source>
</evidence>
<evidence type="ECO:0000256" key="4">
    <source>
        <dbReference type="SAM" id="MobiDB-lite"/>
    </source>
</evidence>
<evidence type="ECO:0000305" key="5"/>
<evidence type="ECO:0000312" key="6">
    <source>
        <dbReference type="Proteomes" id="UP000009136"/>
    </source>
</evidence>
<dbReference type="EMBL" id="AF445640">
    <property type="protein sequence ID" value="AAL38169.1"/>
    <property type="molecule type" value="mRNA"/>
</dbReference>
<dbReference type="RefSeq" id="NP_001289713.1">
    <molecule id="Q8WN55-1"/>
    <property type="nucleotide sequence ID" value="NM_001302784.1"/>
</dbReference>
<dbReference type="RefSeq" id="NP_776867.1">
    <molecule id="Q8WN55-2"/>
    <property type="nucleotide sequence ID" value="NM_174442.3"/>
</dbReference>
<dbReference type="BMRB" id="Q8WN55"/>
<dbReference type="SMR" id="Q8WN55"/>
<dbReference type="FunCoup" id="Q8WN55">
    <property type="interactions" value="3139"/>
</dbReference>
<dbReference type="STRING" id="9913.ENSBTAP00000066720"/>
<dbReference type="SwissPalm" id="Q8WN55"/>
<dbReference type="PaxDb" id="9913-ENSBTAP00000054889"/>
<dbReference type="PeptideAtlas" id="Q8WN55"/>
<dbReference type="Ensembl" id="ENSBTAT00000066209.2">
    <molecule id="Q8WN55-2"/>
    <property type="protein sequence ID" value="ENSBTAP00000054889.1"/>
    <property type="gene ID" value="ENSBTAG00000045828.3"/>
</dbReference>
<dbReference type="Ensembl" id="ENSBTAT00000071097.1">
    <molecule id="Q8WN55-1"/>
    <property type="protein sequence ID" value="ENSBTAP00000066720.1"/>
    <property type="gene ID" value="ENSBTAG00000045828.3"/>
</dbReference>
<dbReference type="GeneID" id="282018"/>
<dbReference type="KEGG" id="bta:282018"/>
<dbReference type="CTD" id="5725"/>
<dbReference type="VEuPathDB" id="HostDB:ENSBTAG00000045828"/>
<dbReference type="eggNOG" id="KOG1190">
    <property type="taxonomic scope" value="Eukaryota"/>
</dbReference>
<dbReference type="GeneTree" id="ENSGT01050000244924"/>
<dbReference type="HOGENOM" id="CLU_015171_7_1_1"/>
<dbReference type="InParanoid" id="Q8WN55"/>
<dbReference type="OMA" id="NMIYPVT"/>
<dbReference type="OrthoDB" id="296632at2759"/>
<dbReference type="TreeFam" id="TF319824"/>
<dbReference type="Reactome" id="R-BTA-6803529">
    <property type="pathway name" value="FGFR2 alternative splicing"/>
</dbReference>
<dbReference type="Reactome" id="R-BTA-72163">
    <property type="pathway name" value="mRNA Splicing - Major Pathway"/>
</dbReference>
<dbReference type="Reactome" id="R-BTA-72203">
    <property type="pathway name" value="Processing of Capped Intron-Containing Pre-mRNA"/>
</dbReference>
<dbReference type="CD-CODE" id="D7FE2080">
    <property type="entry name" value="Nucleolus"/>
</dbReference>
<dbReference type="Proteomes" id="UP000009136">
    <property type="component" value="Chromosome 7"/>
</dbReference>
<dbReference type="Bgee" id="ENSBTAG00000045828">
    <property type="expression patterns" value="Expressed in parenchyma of mammary gland and 105 other cell types or tissues"/>
</dbReference>
<dbReference type="GO" id="GO:0005634">
    <property type="term" value="C:nucleus"/>
    <property type="evidence" value="ECO:0000250"/>
    <property type="project" value="AgBase"/>
</dbReference>
<dbReference type="GO" id="GO:0003729">
    <property type="term" value="F:mRNA binding"/>
    <property type="evidence" value="ECO:0000318"/>
    <property type="project" value="GO_Central"/>
</dbReference>
<dbReference type="GO" id="GO:0036002">
    <property type="term" value="F:pre-mRNA binding"/>
    <property type="evidence" value="ECO:0007669"/>
    <property type="project" value="Ensembl"/>
</dbReference>
<dbReference type="GO" id="GO:0075522">
    <property type="term" value="P:IRES-dependent viral translational initiation"/>
    <property type="evidence" value="ECO:0007669"/>
    <property type="project" value="Ensembl"/>
</dbReference>
<dbReference type="GO" id="GO:0006397">
    <property type="term" value="P:mRNA processing"/>
    <property type="evidence" value="ECO:0007669"/>
    <property type="project" value="UniProtKB-KW"/>
</dbReference>
<dbReference type="GO" id="GO:0048025">
    <property type="term" value="P:negative regulation of mRNA splicing, via spliceosome"/>
    <property type="evidence" value="ECO:0007669"/>
    <property type="project" value="Ensembl"/>
</dbReference>
<dbReference type="GO" id="GO:0051148">
    <property type="term" value="P:negative regulation of muscle cell differentiation"/>
    <property type="evidence" value="ECO:0000250"/>
    <property type="project" value="UniProtKB"/>
</dbReference>
<dbReference type="GO" id="GO:0045665">
    <property type="term" value="P:negative regulation of neuron differentiation"/>
    <property type="evidence" value="ECO:0007669"/>
    <property type="project" value="Ensembl"/>
</dbReference>
<dbReference type="GO" id="GO:0022008">
    <property type="term" value="P:neurogenesis"/>
    <property type="evidence" value="ECO:0007669"/>
    <property type="project" value="Ensembl"/>
</dbReference>
<dbReference type="GO" id="GO:0070886">
    <property type="term" value="P:positive regulation of calcineurin-NFAT signaling cascade"/>
    <property type="evidence" value="ECO:0007669"/>
    <property type="project" value="Ensembl"/>
</dbReference>
<dbReference type="GO" id="GO:0045944">
    <property type="term" value="P:positive regulation of transcription by RNA polymerase II"/>
    <property type="evidence" value="ECO:0007669"/>
    <property type="project" value="Ensembl"/>
</dbReference>
<dbReference type="GO" id="GO:0000381">
    <property type="term" value="P:regulation of alternative mRNA splicing, via spliceosome"/>
    <property type="evidence" value="ECO:0000250"/>
    <property type="project" value="UniProtKB"/>
</dbReference>
<dbReference type="GO" id="GO:0045595">
    <property type="term" value="P:regulation of cell differentiation"/>
    <property type="evidence" value="ECO:0000318"/>
    <property type="project" value="GO_Central"/>
</dbReference>
<dbReference type="GO" id="GO:0043484">
    <property type="term" value="P:regulation of RNA splicing"/>
    <property type="evidence" value="ECO:0000318"/>
    <property type="project" value="GO_Central"/>
</dbReference>
<dbReference type="GO" id="GO:0008380">
    <property type="term" value="P:RNA splicing"/>
    <property type="evidence" value="ECO:0007669"/>
    <property type="project" value="UniProtKB-KW"/>
</dbReference>
<dbReference type="CDD" id="cd12777">
    <property type="entry name" value="RRM1_PTBP1"/>
    <property type="match status" value="1"/>
</dbReference>
<dbReference type="CDD" id="cd12782">
    <property type="entry name" value="RRM2_PTBP1"/>
    <property type="match status" value="1"/>
</dbReference>
<dbReference type="CDD" id="cd12695">
    <property type="entry name" value="RRM3_PTBP1"/>
    <property type="match status" value="1"/>
</dbReference>
<dbReference type="FunFam" id="3.30.70.330:FF:000036">
    <property type="entry name" value="polypyrimidine tract-binding protein 1 isoform X2"/>
    <property type="match status" value="1"/>
</dbReference>
<dbReference type="FunFam" id="3.30.70.330:FF:000162">
    <property type="entry name" value="polypyrimidine tract-binding protein 1 isoform X2"/>
    <property type="match status" value="1"/>
</dbReference>
<dbReference type="FunFam" id="3.30.70.330:FF:000018">
    <property type="entry name" value="Polypyrimidine tract-binding protein 2 isoform 1"/>
    <property type="match status" value="1"/>
</dbReference>
<dbReference type="FunFam" id="3.30.70.330:FF:000032">
    <property type="entry name" value="Polypyrimidine tract-binding protein 2 isoform 1"/>
    <property type="match status" value="1"/>
</dbReference>
<dbReference type="Gene3D" id="3.30.70.330">
    <property type="match status" value="4"/>
</dbReference>
<dbReference type="InterPro" id="IPR006536">
    <property type="entry name" value="HnRNP-L/PTB"/>
</dbReference>
<dbReference type="InterPro" id="IPR012677">
    <property type="entry name" value="Nucleotide-bd_a/b_plait_sf"/>
</dbReference>
<dbReference type="InterPro" id="IPR021790">
    <property type="entry name" value="PTBP1-like_RRM2"/>
</dbReference>
<dbReference type="InterPro" id="IPR035000">
    <property type="entry name" value="PTBP1_RRM1"/>
</dbReference>
<dbReference type="InterPro" id="IPR035001">
    <property type="entry name" value="PTBP1_RRM3"/>
</dbReference>
<dbReference type="InterPro" id="IPR035979">
    <property type="entry name" value="RBD_domain_sf"/>
</dbReference>
<dbReference type="InterPro" id="IPR000504">
    <property type="entry name" value="RRM_dom"/>
</dbReference>
<dbReference type="NCBIfam" id="TIGR01649">
    <property type="entry name" value="hnRNP-L_PTB"/>
    <property type="match status" value="1"/>
</dbReference>
<dbReference type="PANTHER" id="PTHR15592">
    <property type="entry name" value="MATRIN 3/NUCLEAR PROTEIN 220-RELATED"/>
    <property type="match status" value="1"/>
</dbReference>
<dbReference type="Pfam" id="PF00076">
    <property type="entry name" value="RRM_1"/>
    <property type="match status" value="1"/>
</dbReference>
<dbReference type="Pfam" id="PF13893">
    <property type="entry name" value="RRM_5"/>
    <property type="match status" value="1"/>
</dbReference>
<dbReference type="Pfam" id="PF11835">
    <property type="entry name" value="RRM_8"/>
    <property type="match status" value="1"/>
</dbReference>
<dbReference type="SMART" id="SM00360">
    <property type="entry name" value="RRM"/>
    <property type="match status" value="4"/>
</dbReference>
<dbReference type="SUPFAM" id="SSF54928">
    <property type="entry name" value="RNA-binding domain, RBD"/>
    <property type="match status" value="4"/>
</dbReference>
<dbReference type="PROSITE" id="PS50102">
    <property type="entry name" value="RRM"/>
    <property type="match status" value="4"/>
</dbReference>
<keyword id="KW-0007">Acetylation</keyword>
<keyword id="KW-0010">Activator</keyword>
<keyword id="KW-0025">Alternative splicing</keyword>
<keyword id="KW-1017">Isopeptide bond</keyword>
<keyword id="KW-0507">mRNA processing</keyword>
<keyword id="KW-0508">mRNA splicing</keyword>
<keyword id="KW-0539">Nucleus</keyword>
<keyword id="KW-0597">Phosphoprotein</keyword>
<keyword id="KW-1185">Reference proteome</keyword>
<keyword id="KW-0677">Repeat</keyword>
<keyword id="KW-0678">Repressor</keyword>
<keyword id="KW-0694">RNA-binding</keyword>
<keyword id="KW-0832">Ubl conjugation</keyword>
<comment type="function">
    <text evidence="2">Plays a role in pre-mRNA splicing and in the regulation of alternative splicing events. Activates exon skipping of its own pre-mRNA during muscle cell differentiation. Binds to the polypyrimidine tract of introns. May promote RNA looping when bound to two separate polypyrimidine tracts in the same pre-mRNA. May promote the binding of U2 snRNP to pre-mRNA. Cooperates with RAVER1 to modulate switching between mutually exclusive exons during maturation of the TPM1 pre-mRNA. Represses the splicing of MAPT/Tau exon 10. Binds to polypyrimidine-rich controlling element (PCE) of CFTR and promotes exon skipping of CFTR exon 9, thereby antagonizing TIA1 and its role in exon inclusion of CFTR exon 9. Plays a role in the splicing of pyruvate kinase PKM by binding repressively to a polypyrimidine tract flanking PKM exon 9, inhibiting exon 9 inclusion and resulting in exon 10 inclusion and production of the PKM M2 isoform.</text>
</comment>
<comment type="subunit">
    <text evidence="1">Monomer. Part of a ternary complex containing KHSRP, PTBP1, PTBP2 and HNRPH1. Interacts with RAVER1 and SFPQ (By similarity).</text>
</comment>
<comment type="subcellular location">
    <subcellularLocation>
        <location evidence="1">Nucleus</location>
    </subcellularLocation>
</comment>
<comment type="alternative products">
    <event type="alternative splicing"/>
    <isoform>
        <id>Q8WN55-1</id>
        <name>1</name>
        <sequence type="displayed"/>
    </isoform>
    <isoform>
        <id>Q8WN55-2</id>
        <name>2</name>
        <sequence type="described" ref="VSP_061651"/>
    </isoform>
</comment>
<protein>
    <recommendedName>
        <fullName>Polypyrimidine tract-binding protein 1</fullName>
        <shortName>PTB</shortName>
    </recommendedName>
</protein>
<organism>
    <name type="scientific">Bos taurus</name>
    <name type="common">Bovine</name>
    <dbReference type="NCBI Taxonomy" id="9913"/>
    <lineage>
        <taxon>Eukaryota</taxon>
        <taxon>Metazoa</taxon>
        <taxon>Chordata</taxon>
        <taxon>Craniata</taxon>
        <taxon>Vertebrata</taxon>
        <taxon>Euteleostomi</taxon>
        <taxon>Mammalia</taxon>
        <taxon>Eutheria</taxon>
        <taxon>Laurasiatheria</taxon>
        <taxon>Artiodactyla</taxon>
        <taxon>Ruminantia</taxon>
        <taxon>Pecora</taxon>
        <taxon>Bovidae</taxon>
        <taxon>Bovinae</taxon>
        <taxon>Bos</taxon>
    </lineage>
</organism>
<name>PTBP1_BOVIN</name>